<reference key="1">
    <citation type="journal article" date="1995" name="Science">
        <title>Whole-genome random sequencing and assembly of Haemophilus influenzae Rd.</title>
        <authorList>
            <person name="Fleischmann R.D."/>
            <person name="Adams M.D."/>
            <person name="White O."/>
            <person name="Clayton R.A."/>
            <person name="Kirkness E.F."/>
            <person name="Kerlavage A.R."/>
            <person name="Bult C.J."/>
            <person name="Tomb J.-F."/>
            <person name="Dougherty B.A."/>
            <person name="Merrick J.M."/>
            <person name="McKenney K."/>
            <person name="Sutton G.G."/>
            <person name="FitzHugh W."/>
            <person name="Fields C.A."/>
            <person name="Gocayne J.D."/>
            <person name="Scott J.D."/>
            <person name="Shirley R."/>
            <person name="Liu L.-I."/>
            <person name="Glodek A."/>
            <person name="Kelley J.M."/>
            <person name="Weidman J.F."/>
            <person name="Phillips C.A."/>
            <person name="Spriggs T."/>
            <person name="Hedblom E."/>
            <person name="Cotton M.D."/>
            <person name="Utterback T.R."/>
            <person name="Hanna M.C."/>
            <person name="Nguyen D.T."/>
            <person name="Saudek D.M."/>
            <person name="Brandon R.C."/>
            <person name="Fine L.D."/>
            <person name="Fritchman J.L."/>
            <person name="Fuhrmann J.L."/>
            <person name="Geoghagen N.S.M."/>
            <person name="Gnehm C.L."/>
            <person name="McDonald L.A."/>
            <person name="Small K.V."/>
            <person name="Fraser C.M."/>
            <person name="Smith H.O."/>
            <person name="Venter J.C."/>
        </authorList>
    </citation>
    <scope>NUCLEOTIDE SEQUENCE [LARGE SCALE GENOMIC DNA]</scope>
    <source>
        <strain>ATCC 51907 / DSM 11121 / KW20 / Rd</strain>
    </source>
</reference>
<feature type="chain" id="PRO_0000159284" description="Ferredoxin-type protein NapH">
    <location>
        <begin position="1"/>
        <end position="287"/>
    </location>
</feature>
<feature type="topological domain" description="Cytoplasmic" evidence="1">
    <location>
        <begin position="1"/>
        <end position="29"/>
    </location>
</feature>
<feature type="transmembrane region" description="Helical" evidence="2">
    <location>
        <begin position="30"/>
        <end position="50"/>
    </location>
</feature>
<feature type="topological domain" description="Periplasmic" evidence="1">
    <location>
        <begin position="51"/>
        <end position="79"/>
    </location>
</feature>
<feature type="transmembrane region" description="Helical" evidence="2">
    <location>
        <begin position="80"/>
        <end position="100"/>
    </location>
</feature>
<feature type="topological domain" description="Cytoplasmic" evidence="1">
    <location>
        <begin position="101"/>
        <end position="139"/>
    </location>
</feature>
<feature type="transmembrane region" description="Helical" evidence="2">
    <location>
        <begin position="140"/>
        <end position="160"/>
    </location>
</feature>
<feature type="topological domain" description="Periplasmic" evidence="1">
    <location>
        <begin position="161"/>
        <end position="170"/>
    </location>
</feature>
<feature type="transmembrane region" description="Helical" evidence="2">
    <location>
        <begin position="171"/>
        <end position="191"/>
    </location>
</feature>
<feature type="topological domain" description="Cytoplasmic" evidence="1">
    <location>
        <begin position="192"/>
        <end position="287"/>
    </location>
</feature>
<feature type="domain" description="4Fe-4S ferredoxin-type 1" evidence="3">
    <location>
        <begin position="217"/>
        <end position="247"/>
    </location>
</feature>
<feature type="domain" description="4Fe-4S ferredoxin-type 2" evidence="3">
    <location>
        <begin position="252"/>
        <end position="281"/>
    </location>
</feature>
<feature type="binding site" evidence="3">
    <location>
        <position position="226"/>
    </location>
    <ligand>
        <name>[4Fe-4S] cluster</name>
        <dbReference type="ChEBI" id="CHEBI:49883"/>
        <label>1</label>
    </ligand>
</feature>
<feature type="binding site" evidence="3">
    <location>
        <position position="229"/>
    </location>
    <ligand>
        <name>[4Fe-4S] cluster</name>
        <dbReference type="ChEBI" id="CHEBI:49883"/>
        <label>1</label>
    </ligand>
</feature>
<feature type="binding site" evidence="3">
    <location>
        <position position="232"/>
    </location>
    <ligand>
        <name>[4Fe-4S] cluster</name>
        <dbReference type="ChEBI" id="CHEBI:49883"/>
        <label>1</label>
    </ligand>
</feature>
<feature type="binding site" evidence="3">
    <location>
        <position position="236"/>
    </location>
    <ligand>
        <name>[4Fe-4S] cluster</name>
        <dbReference type="ChEBI" id="CHEBI:49883"/>
        <label>1</label>
    </ligand>
</feature>
<feature type="binding site" evidence="3">
    <location>
        <position position="261"/>
    </location>
    <ligand>
        <name>[4Fe-4S] cluster</name>
        <dbReference type="ChEBI" id="CHEBI:49883"/>
        <label>2</label>
    </ligand>
</feature>
<feature type="binding site" evidence="3">
    <location>
        <position position="264"/>
    </location>
    <ligand>
        <name>[4Fe-4S] cluster</name>
        <dbReference type="ChEBI" id="CHEBI:49883"/>
        <label>2</label>
    </ligand>
</feature>
<feature type="binding site" evidence="3">
    <location>
        <position position="267"/>
    </location>
    <ligand>
        <name>[4Fe-4S] cluster</name>
        <dbReference type="ChEBI" id="CHEBI:49883"/>
        <label>2</label>
    </ligand>
</feature>
<feature type="binding site" evidence="3">
    <location>
        <position position="271"/>
    </location>
    <ligand>
        <name>[4Fe-4S] cluster</name>
        <dbReference type="ChEBI" id="CHEBI:49883"/>
        <label>2</label>
    </ligand>
</feature>
<keyword id="KW-0004">4Fe-4S</keyword>
<keyword id="KW-0997">Cell inner membrane</keyword>
<keyword id="KW-1003">Cell membrane</keyword>
<keyword id="KW-0249">Electron transport</keyword>
<keyword id="KW-0408">Iron</keyword>
<keyword id="KW-0411">Iron-sulfur</keyword>
<keyword id="KW-0472">Membrane</keyword>
<keyword id="KW-0479">Metal-binding</keyword>
<keyword id="KW-1185">Reference proteome</keyword>
<keyword id="KW-0677">Repeat</keyword>
<keyword id="KW-0812">Transmembrane</keyword>
<keyword id="KW-1133">Transmembrane helix</keyword>
<keyword id="KW-0813">Transport</keyword>
<accession>P44653</accession>
<protein>
    <recommendedName>
        <fullName evidence="1">Ferredoxin-type protein NapH</fullName>
    </recommendedName>
</protein>
<proteinExistence type="inferred from homology"/>
<organism>
    <name type="scientific">Haemophilus influenzae (strain ATCC 51907 / DSM 11121 / KW20 / Rd)</name>
    <dbReference type="NCBI Taxonomy" id="71421"/>
    <lineage>
        <taxon>Bacteria</taxon>
        <taxon>Pseudomonadati</taxon>
        <taxon>Pseudomonadota</taxon>
        <taxon>Gammaproteobacteria</taxon>
        <taxon>Pasteurellales</taxon>
        <taxon>Pasteurellaceae</taxon>
        <taxon>Haemophilus</taxon>
    </lineage>
</organism>
<comment type="function">
    <text evidence="1">Required for electron transfer from ubiquinol, via NapC, to the periplasmic nitrate reductase NapAB complex.</text>
</comment>
<comment type="cofactor">
    <cofactor evidence="3">
        <name>[4Fe-4S] cluster</name>
        <dbReference type="ChEBI" id="CHEBI:49883"/>
    </cofactor>
    <text evidence="3">Binds 2 [4Fe-4S] cluster.</text>
</comment>
<comment type="subunit">
    <text evidence="1">Interacts with NapC.</text>
</comment>
<comment type="subcellular location">
    <subcellularLocation>
        <location evidence="1">Cell inner membrane</location>
        <topology evidence="2">Multi-pass membrane protein</topology>
    </subcellularLocation>
</comment>
<sequence>MANAPKFAGKESREKWGWWYANRFLFWRRLSQLSILAMFLSGPYFGVWILKGNYSGSLLLDTIPLSDPLITAESLAARHLPDALTLIGAAIIVLFYAVLGSKVFCGWVCPLNVVTDCAAWLRRKLGIRQTAKISRGLRYGILVLILLGSSVSGMLLWEWVNPVAALGRAFVFGFGATGWLLLVIFLFDLLIAEHGWCGHLCPIGAAYGVIGAKSLIRIKVIDRAKCDNCMDCYNVCPEAQVLRSPLHGKKDESLLVLSKDCISCGRCIDVCAEKVFKFSTRFDHSGE</sequence>
<gene>
    <name type="primary">napH</name>
    <name type="ordered locus">HI_0346</name>
</gene>
<evidence type="ECO:0000250" key="1">
    <source>
        <dbReference type="UniProtKB" id="P33934"/>
    </source>
</evidence>
<evidence type="ECO:0000255" key="2"/>
<evidence type="ECO:0000255" key="3">
    <source>
        <dbReference type="PROSITE-ProRule" id="PRU00711"/>
    </source>
</evidence>
<dbReference type="EMBL" id="L42023">
    <property type="protein sequence ID" value="AAC22007.1"/>
    <property type="molecule type" value="Genomic_DNA"/>
</dbReference>
<dbReference type="PIR" id="B64149">
    <property type="entry name" value="B64149"/>
</dbReference>
<dbReference type="RefSeq" id="NP_438510.1">
    <property type="nucleotide sequence ID" value="NC_000907.1"/>
</dbReference>
<dbReference type="STRING" id="71421.HI_0346"/>
<dbReference type="EnsemblBacteria" id="AAC22007">
    <property type="protein sequence ID" value="AAC22007"/>
    <property type="gene ID" value="HI_0346"/>
</dbReference>
<dbReference type="KEGG" id="hin:HI_0346"/>
<dbReference type="PATRIC" id="fig|71421.8.peg.365"/>
<dbReference type="eggNOG" id="COG0348">
    <property type="taxonomic scope" value="Bacteria"/>
</dbReference>
<dbReference type="HOGENOM" id="CLU_066585_1_0_6"/>
<dbReference type="OrthoDB" id="9806398at2"/>
<dbReference type="PhylomeDB" id="P44653"/>
<dbReference type="BioCyc" id="HINF71421:G1GJ1-362-MONOMER"/>
<dbReference type="Proteomes" id="UP000000579">
    <property type="component" value="Chromosome"/>
</dbReference>
<dbReference type="GO" id="GO:0005886">
    <property type="term" value="C:plasma membrane"/>
    <property type="evidence" value="ECO:0000318"/>
    <property type="project" value="GO_Central"/>
</dbReference>
<dbReference type="GO" id="GO:0051539">
    <property type="term" value="F:4 iron, 4 sulfur cluster binding"/>
    <property type="evidence" value="ECO:0007669"/>
    <property type="project" value="UniProtKB-KW"/>
</dbReference>
<dbReference type="GO" id="GO:0046872">
    <property type="term" value="F:metal ion binding"/>
    <property type="evidence" value="ECO:0007669"/>
    <property type="project" value="UniProtKB-KW"/>
</dbReference>
<dbReference type="Gene3D" id="3.30.70.20">
    <property type="match status" value="1"/>
</dbReference>
<dbReference type="InterPro" id="IPR017896">
    <property type="entry name" value="4Fe4S_Fe-S-bd"/>
</dbReference>
<dbReference type="InterPro" id="IPR017900">
    <property type="entry name" value="4Fe4S_Fe_S_CS"/>
</dbReference>
<dbReference type="InterPro" id="IPR051684">
    <property type="entry name" value="Electron_Trans/Redox"/>
</dbReference>
<dbReference type="InterPro" id="IPR011886">
    <property type="entry name" value="NapH_MauN"/>
</dbReference>
<dbReference type="NCBIfam" id="TIGR02163">
    <property type="entry name" value="napH"/>
    <property type="match status" value="1"/>
</dbReference>
<dbReference type="NCBIfam" id="NF007013">
    <property type="entry name" value="PRK09477.1"/>
    <property type="match status" value="1"/>
</dbReference>
<dbReference type="PANTHER" id="PTHR30176">
    <property type="entry name" value="FERREDOXIN-TYPE PROTEIN NAPH"/>
    <property type="match status" value="1"/>
</dbReference>
<dbReference type="PANTHER" id="PTHR30176:SF3">
    <property type="entry name" value="FERREDOXIN-TYPE PROTEIN NAPH"/>
    <property type="match status" value="1"/>
</dbReference>
<dbReference type="Pfam" id="PF12801">
    <property type="entry name" value="Fer4_5"/>
    <property type="match status" value="2"/>
</dbReference>
<dbReference type="Pfam" id="PF12838">
    <property type="entry name" value="Fer4_7"/>
    <property type="match status" value="1"/>
</dbReference>
<dbReference type="SUPFAM" id="SSF54862">
    <property type="entry name" value="4Fe-4S ferredoxins"/>
    <property type="match status" value="1"/>
</dbReference>
<dbReference type="PROSITE" id="PS00198">
    <property type="entry name" value="4FE4S_FER_1"/>
    <property type="match status" value="1"/>
</dbReference>
<dbReference type="PROSITE" id="PS51379">
    <property type="entry name" value="4FE4S_FER_2"/>
    <property type="match status" value="2"/>
</dbReference>
<name>NAPH_HAEIN</name>